<dbReference type="EMBL" id="AJ235273">
    <property type="protein sequence ID" value="CAA15291.1"/>
    <property type="molecule type" value="Genomic_DNA"/>
</dbReference>
<dbReference type="PIR" id="C71649">
    <property type="entry name" value="C71649"/>
</dbReference>
<dbReference type="RefSeq" id="NP_221215.1">
    <property type="nucleotide sequence ID" value="NC_000963.1"/>
</dbReference>
<dbReference type="RefSeq" id="WP_004596749.1">
    <property type="nucleotide sequence ID" value="NC_000963.1"/>
</dbReference>
<dbReference type="SMR" id="Q9ZC99"/>
<dbReference type="STRING" id="272947.gene:17555936"/>
<dbReference type="MEROPS" id="A32.002"/>
<dbReference type="EnsemblBacteria" id="CAA15291">
    <property type="protein sequence ID" value="CAA15291"/>
    <property type="gene ID" value="CAA15291"/>
</dbReference>
<dbReference type="KEGG" id="rpr:RP867"/>
<dbReference type="PATRIC" id="fig|272947.5.peg.906"/>
<dbReference type="eggNOG" id="COG3577">
    <property type="taxonomic scope" value="Bacteria"/>
</dbReference>
<dbReference type="HOGENOM" id="CLU_099411_0_1_5"/>
<dbReference type="OrthoDB" id="7595324at2"/>
<dbReference type="Proteomes" id="UP000002480">
    <property type="component" value="Chromosome"/>
</dbReference>
<dbReference type="GO" id="GO:0005886">
    <property type="term" value="C:plasma membrane"/>
    <property type="evidence" value="ECO:0007669"/>
    <property type="project" value="UniProtKB-SubCell"/>
</dbReference>
<dbReference type="GO" id="GO:0004190">
    <property type="term" value="F:aspartic-type endopeptidase activity"/>
    <property type="evidence" value="ECO:0007669"/>
    <property type="project" value="InterPro"/>
</dbReference>
<dbReference type="GO" id="GO:0006508">
    <property type="term" value="P:proteolysis"/>
    <property type="evidence" value="ECO:0007669"/>
    <property type="project" value="InterPro"/>
</dbReference>
<dbReference type="CDD" id="cd05483">
    <property type="entry name" value="retropepsin_like_bacteria"/>
    <property type="match status" value="1"/>
</dbReference>
<dbReference type="Gene3D" id="2.40.70.10">
    <property type="entry name" value="Acid Proteases"/>
    <property type="match status" value="1"/>
</dbReference>
<dbReference type="InterPro" id="IPR001969">
    <property type="entry name" value="Aspartic_peptidase_AS"/>
</dbReference>
<dbReference type="InterPro" id="IPR011969">
    <property type="entry name" value="Clan_AA_Asp_peptidase_C"/>
</dbReference>
<dbReference type="InterPro" id="IPR021109">
    <property type="entry name" value="Peptidase_aspartic_dom_sf"/>
</dbReference>
<dbReference type="InterPro" id="IPR034122">
    <property type="entry name" value="Retropepsin-like_bacterial"/>
</dbReference>
<dbReference type="NCBIfam" id="TIGR02281">
    <property type="entry name" value="clan_AA_DTGA"/>
    <property type="match status" value="1"/>
</dbReference>
<dbReference type="Pfam" id="PF13975">
    <property type="entry name" value="gag-asp_proteas"/>
    <property type="match status" value="1"/>
</dbReference>
<dbReference type="SUPFAM" id="SSF50630">
    <property type="entry name" value="Acid proteases"/>
    <property type="match status" value="1"/>
</dbReference>
<keyword id="KW-1003">Cell membrane</keyword>
<keyword id="KW-0472">Membrane</keyword>
<keyword id="KW-1185">Reference proteome</keyword>
<keyword id="KW-0812">Transmembrane</keyword>
<keyword id="KW-1133">Transmembrane helix</keyword>
<gene>
    <name type="ordered locus">RP867</name>
</gene>
<proteinExistence type="predicted"/>
<protein>
    <recommendedName>
        <fullName>Uncharacterized protein RP867</fullName>
    </recommendedName>
</protein>
<name>Y867_RICPR</name>
<sequence length="231" mass="26472">MNKRLIKLIFIVCSTVIVTGVLYKYINQNYPKFFKESQNIVSFYALLLLLFSIIYSTFSRKEIRRFCFQLAMWAVIFLVIITGYAFRFELHYAYHRVISALIPSYKWSTEVGEIIIARSGDGHFYINACVNNVKIKFMVDTGASDIALTKEDAQKLGFDLNKLKYTRTYLTANGENKAAPIILNSVVIGTEFKNIKGHVGLGNLDISLLGMSLLERFKGFRIDKDLLILNY</sequence>
<accession>Q9ZC99</accession>
<reference key="1">
    <citation type="journal article" date="1998" name="Nature">
        <title>The genome sequence of Rickettsia prowazekii and the origin of mitochondria.</title>
        <authorList>
            <person name="Andersson S.G.E."/>
            <person name="Zomorodipour A."/>
            <person name="Andersson J.O."/>
            <person name="Sicheritz-Ponten T."/>
            <person name="Alsmark U.C.M."/>
            <person name="Podowski R.M."/>
            <person name="Naeslund A.K."/>
            <person name="Eriksson A.-S."/>
            <person name="Winkler H.H."/>
            <person name="Kurland C.G."/>
        </authorList>
    </citation>
    <scope>NUCLEOTIDE SEQUENCE [LARGE SCALE GENOMIC DNA]</scope>
    <source>
        <strain>Madrid E</strain>
    </source>
</reference>
<comment type="subcellular location">
    <subcellularLocation>
        <location evidence="2">Cell membrane</location>
        <topology evidence="2">Multi-pass membrane protein</topology>
    </subcellularLocation>
</comment>
<organism>
    <name type="scientific">Rickettsia prowazekii (strain Madrid E)</name>
    <dbReference type="NCBI Taxonomy" id="272947"/>
    <lineage>
        <taxon>Bacteria</taxon>
        <taxon>Pseudomonadati</taxon>
        <taxon>Pseudomonadota</taxon>
        <taxon>Alphaproteobacteria</taxon>
        <taxon>Rickettsiales</taxon>
        <taxon>Rickettsiaceae</taxon>
        <taxon>Rickettsieae</taxon>
        <taxon>Rickettsia</taxon>
        <taxon>typhus group</taxon>
    </lineage>
</organism>
<evidence type="ECO:0000255" key="1"/>
<evidence type="ECO:0000305" key="2"/>
<feature type="chain" id="PRO_0000101425" description="Uncharacterized protein RP867">
    <location>
        <begin position="1"/>
        <end position="231"/>
    </location>
</feature>
<feature type="transmembrane region" description="Helical" evidence="1">
    <location>
        <begin position="6"/>
        <end position="26"/>
    </location>
</feature>
<feature type="transmembrane region" description="Helical" evidence="1">
    <location>
        <begin position="39"/>
        <end position="59"/>
    </location>
</feature>
<feature type="transmembrane region" description="Helical" evidence="1">
    <location>
        <begin position="66"/>
        <end position="86"/>
    </location>
</feature>